<reference key="1">
    <citation type="submission" date="2007-07" db="EMBL/GenBank/DDBJ databases">
        <title>Complete genome sequence of Campylobacter hominis ATCC BAA-381, a commensal isolated from the human gastrointestinal tract.</title>
        <authorList>
            <person name="Fouts D.E."/>
            <person name="Mongodin E.F."/>
            <person name="Puiu D."/>
            <person name="Sebastian Y."/>
            <person name="Miller W.G."/>
            <person name="Mandrell R.E."/>
            <person name="Nelson K.E."/>
        </authorList>
    </citation>
    <scope>NUCLEOTIDE SEQUENCE [LARGE SCALE GENOMIC DNA]</scope>
    <source>
        <strain>ATCC BAA-381 / DSM 21671 / CCUG 45161 / LMG 19568 / NCTC 13146 / CH001A</strain>
    </source>
</reference>
<organism>
    <name type="scientific">Campylobacter hominis (strain ATCC BAA-381 / DSM 21671 / CCUG 45161 / LMG 19568 / NCTC 13146 / CH001A)</name>
    <dbReference type="NCBI Taxonomy" id="360107"/>
    <lineage>
        <taxon>Bacteria</taxon>
        <taxon>Pseudomonadati</taxon>
        <taxon>Campylobacterota</taxon>
        <taxon>Epsilonproteobacteria</taxon>
        <taxon>Campylobacterales</taxon>
        <taxon>Campylobacteraceae</taxon>
        <taxon>Campylobacter</taxon>
    </lineage>
</organism>
<comment type="function">
    <text evidence="1">Reversibly transfers an adenylyl group from ATP to 4'-phosphopantetheine, yielding dephospho-CoA (dPCoA) and pyrophosphate.</text>
</comment>
<comment type="catalytic activity">
    <reaction evidence="1">
        <text>(R)-4'-phosphopantetheine + ATP + H(+) = 3'-dephospho-CoA + diphosphate</text>
        <dbReference type="Rhea" id="RHEA:19801"/>
        <dbReference type="ChEBI" id="CHEBI:15378"/>
        <dbReference type="ChEBI" id="CHEBI:30616"/>
        <dbReference type="ChEBI" id="CHEBI:33019"/>
        <dbReference type="ChEBI" id="CHEBI:57328"/>
        <dbReference type="ChEBI" id="CHEBI:61723"/>
        <dbReference type="EC" id="2.7.7.3"/>
    </reaction>
</comment>
<comment type="cofactor">
    <cofactor evidence="1">
        <name>Mg(2+)</name>
        <dbReference type="ChEBI" id="CHEBI:18420"/>
    </cofactor>
</comment>
<comment type="pathway">
    <text evidence="1">Cofactor biosynthesis; coenzyme A biosynthesis; CoA from (R)-pantothenate: step 4/5.</text>
</comment>
<comment type="subunit">
    <text evidence="1">Homohexamer.</text>
</comment>
<comment type="subcellular location">
    <subcellularLocation>
        <location evidence="1">Cytoplasm</location>
    </subcellularLocation>
</comment>
<comment type="similarity">
    <text evidence="1">Belongs to the bacterial CoaD family.</text>
</comment>
<accession>A7I1U3</accession>
<gene>
    <name evidence="1" type="primary">coaD</name>
    <name type="ordered locus">CHAB381_0923</name>
</gene>
<feature type="chain" id="PRO_1000123274" description="Phosphopantetheine adenylyltransferase">
    <location>
        <begin position="1"/>
        <end position="159"/>
    </location>
</feature>
<feature type="binding site" evidence="1">
    <location>
        <begin position="10"/>
        <end position="11"/>
    </location>
    <ligand>
        <name>ATP</name>
        <dbReference type="ChEBI" id="CHEBI:30616"/>
    </ligand>
</feature>
<feature type="binding site" evidence="1">
    <location>
        <position position="10"/>
    </location>
    <ligand>
        <name>substrate</name>
    </ligand>
</feature>
<feature type="binding site" evidence="1">
    <location>
        <position position="18"/>
    </location>
    <ligand>
        <name>ATP</name>
        <dbReference type="ChEBI" id="CHEBI:30616"/>
    </ligand>
</feature>
<feature type="binding site" evidence="1">
    <location>
        <position position="42"/>
    </location>
    <ligand>
        <name>substrate</name>
    </ligand>
</feature>
<feature type="binding site" evidence="1">
    <location>
        <position position="74"/>
    </location>
    <ligand>
        <name>substrate</name>
    </ligand>
</feature>
<feature type="binding site" evidence="1">
    <location>
        <position position="88"/>
    </location>
    <ligand>
        <name>substrate</name>
    </ligand>
</feature>
<feature type="binding site" evidence="1">
    <location>
        <begin position="89"/>
        <end position="91"/>
    </location>
    <ligand>
        <name>ATP</name>
        <dbReference type="ChEBI" id="CHEBI:30616"/>
    </ligand>
</feature>
<feature type="binding site" evidence="1">
    <location>
        <position position="99"/>
    </location>
    <ligand>
        <name>ATP</name>
        <dbReference type="ChEBI" id="CHEBI:30616"/>
    </ligand>
</feature>
<feature type="binding site" evidence="1">
    <location>
        <begin position="124"/>
        <end position="130"/>
    </location>
    <ligand>
        <name>ATP</name>
        <dbReference type="ChEBI" id="CHEBI:30616"/>
    </ligand>
</feature>
<feature type="site" description="Transition state stabilizer" evidence="1">
    <location>
        <position position="18"/>
    </location>
</feature>
<protein>
    <recommendedName>
        <fullName evidence="1">Phosphopantetheine adenylyltransferase</fullName>
        <ecNumber evidence="1">2.7.7.3</ecNumber>
    </recommendedName>
    <alternativeName>
        <fullName evidence="1">Dephospho-CoA pyrophosphorylase</fullName>
    </alternativeName>
    <alternativeName>
        <fullName evidence="1">Pantetheine-phosphate adenylyltransferase</fullName>
        <shortName evidence="1">PPAT</shortName>
    </alternativeName>
</protein>
<dbReference type="EC" id="2.7.7.3" evidence="1"/>
<dbReference type="EMBL" id="CP000776">
    <property type="protein sequence ID" value="ABS51731.1"/>
    <property type="molecule type" value="Genomic_DNA"/>
</dbReference>
<dbReference type="RefSeq" id="WP_012108776.1">
    <property type="nucleotide sequence ID" value="NC_009714.1"/>
</dbReference>
<dbReference type="SMR" id="A7I1U3"/>
<dbReference type="STRING" id="360107.CHAB381_0923"/>
<dbReference type="KEGG" id="cha:CHAB381_0923"/>
<dbReference type="eggNOG" id="COG0669">
    <property type="taxonomic scope" value="Bacteria"/>
</dbReference>
<dbReference type="HOGENOM" id="CLU_100149_0_1_7"/>
<dbReference type="OrthoDB" id="9806661at2"/>
<dbReference type="UniPathway" id="UPA00241">
    <property type="reaction ID" value="UER00355"/>
</dbReference>
<dbReference type="Proteomes" id="UP000002407">
    <property type="component" value="Chromosome"/>
</dbReference>
<dbReference type="GO" id="GO:0005737">
    <property type="term" value="C:cytoplasm"/>
    <property type="evidence" value="ECO:0007669"/>
    <property type="project" value="UniProtKB-SubCell"/>
</dbReference>
<dbReference type="GO" id="GO:0005524">
    <property type="term" value="F:ATP binding"/>
    <property type="evidence" value="ECO:0007669"/>
    <property type="project" value="UniProtKB-KW"/>
</dbReference>
<dbReference type="GO" id="GO:0004595">
    <property type="term" value="F:pantetheine-phosphate adenylyltransferase activity"/>
    <property type="evidence" value="ECO:0007669"/>
    <property type="project" value="UniProtKB-UniRule"/>
</dbReference>
<dbReference type="GO" id="GO:0015937">
    <property type="term" value="P:coenzyme A biosynthetic process"/>
    <property type="evidence" value="ECO:0007669"/>
    <property type="project" value="UniProtKB-UniRule"/>
</dbReference>
<dbReference type="CDD" id="cd02163">
    <property type="entry name" value="PPAT"/>
    <property type="match status" value="1"/>
</dbReference>
<dbReference type="Gene3D" id="3.40.50.620">
    <property type="entry name" value="HUPs"/>
    <property type="match status" value="1"/>
</dbReference>
<dbReference type="HAMAP" id="MF_00151">
    <property type="entry name" value="PPAT_bact"/>
    <property type="match status" value="1"/>
</dbReference>
<dbReference type="InterPro" id="IPR004821">
    <property type="entry name" value="Cyt_trans-like"/>
</dbReference>
<dbReference type="InterPro" id="IPR001980">
    <property type="entry name" value="PPAT"/>
</dbReference>
<dbReference type="InterPro" id="IPR014729">
    <property type="entry name" value="Rossmann-like_a/b/a_fold"/>
</dbReference>
<dbReference type="NCBIfam" id="TIGR01510">
    <property type="entry name" value="coaD_prev_kdtB"/>
    <property type="match status" value="1"/>
</dbReference>
<dbReference type="NCBIfam" id="TIGR00125">
    <property type="entry name" value="cyt_tran_rel"/>
    <property type="match status" value="1"/>
</dbReference>
<dbReference type="PANTHER" id="PTHR21342">
    <property type="entry name" value="PHOSPHOPANTETHEINE ADENYLYLTRANSFERASE"/>
    <property type="match status" value="1"/>
</dbReference>
<dbReference type="PANTHER" id="PTHR21342:SF1">
    <property type="entry name" value="PHOSPHOPANTETHEINE ADENYLYLTRANSFERASE"/>
    <property type="match status" value="1"/>
</dbReference>
<dbReference type="Pfam" id="PF01467">
    <property type="entry name" value="CTP_transf_like"/>
    <property type="match status" value="1"/>
</dbReference>
<dbReference type="PRINTS" id="PR01020">
    <property type="entry name" value="LPSBIOSNTHSS"/>
</dbReference>
<dbReference type="SUPFAM" id="SSF52374">
    <property type="entry name" value="Nucleotidylyl transferase"/>
    <property type="match status" value="1"/>
</dbReference>
<proteinExistence type="inferred from homology"/>
<sequence length="159" mass="18317">MRTNCIYPGTFDPITNGHLDVIKRALRIFDNVIVAVAKSDNKKPFFELDKRVEMVKEATKSLENIEVIAFENLLVDFAKSQDTCFVIRGLRAVSDFEYELQLGYANRSLWDKFETIYLMPTIKYSFISSSIVRSIFEHGGDISHLVPKEILPFLEDKKC</sequence>
<name>COAD_CAMHC</name>
<evidence type="ECO:0000255" key="1">
    <source>
        <dbReference type="HAMAP-Rule" id="MF_00151"/>
    </source>
</evidence>
<keyword id="KW-0067">ATP-binding</keyword>
<keyword id="KW-0173">Coenzyme A biosynthesis</keyword>
<keyword id="KW-0963">Cytoplasm</keyword>
<keyword id="KW-0460">Magnesium</keyword>
<keyword id="KW-0547">Nucleotide-binding</keyword>
<keyword id="KW-0548">Nucleotidyltransferase</keyword>
<keyword id="KW-1185">Reference proteome</keyword>
<keyword id="KW-0808">Transferase</keyword>